<comment type="subcellular location">
    <subcellularLocation>
        <location evidence="2">Host membrane</location>
        <topology evidence="2">Single-pass membrane protein</topology>
    </subcellularLocation>
</comment>
<comment type="similarity">
    <text evidence="2">Belongs to the plectrovirus ORF7 family.</text>
</comment>
<gene>
    <name type="ORF">ORF7</name>
</gene>
<accession>P15898</accession>
<feature type="chain" id="PRO_0000065801" description="Uncharacterized protein ORF7">
    <location>
        <begin position="1"/>
        <end position="83"/>
    </location>
</feature>
<feature type="transmembrane region" description="Helical" evidence="1">
    <location>
        <begin position="50"/>
        <end position="70"/>
    </location>
</feature>
<name>ORF7_SPV1R</name>
<organismHost>
    <name type="scientific">Spiroplasma citri</name>
    <dbReference type="NCBI Taxonomy" id="2133"/>
</organismHost>
<organism>
    <name type="scientific">Spiroplasma virus SpV1-R8A2 B</name>
    <name type="common">SpV1</name>
    <name type="synonym">Spiroplasma virus 1</name>
    <dbReference type="NCBI Taxonomy" id="10854"/>
    <lineage>
        <taxon>Viruses</taxon>
        <taxon>Monodnaviria</taxon>
        <taxon>Loebvirae</taxon>
        <taxon>Hofneiviricota</taxon>
        <taxon>Faserviricetes</taxon>
        <taxon>Tubulavirales</taxon>
        <taxon>Plectroviridae</taxon>
        <taxon>Vespertiliovirus</taxon>
        <taxon>Vespertiliovirus R8A2B</taxon>
    </lineage>
</organism>
<evidence type="ECO:0000255" key="1"/>
<evidence type="ECO:0000305" key="2"/>
<protein>
    <recommendedName>
        <fullName>Uncharacterized protein ORF7</fullName>
    </recommendedName>
    <alternativeName>
        <fullName>Gene 7 protein</fullName>
    </alternativeName>
</protein>
<reference key="1">
    <citation type="journal article" date="1990" name="Nucleic Acids Res.">
        <title>Complete nucleotide sequence of the genome of Spiroplasma citri virus SpV1-R8A2 B.</title>
        <authorList>
            <person name="Renaudin J."/>
            <person name="Aullo P."/>
            <person name="Vignault J.C."/>
            <person name="Bove J.M."/>
        </authorList>
    </citation>
    <scope>NUCLEOTIDE SEQUENCE [GENOMIC DNA]</scope>
</reference>
<proteinExistence type="inferred from homology"/>
<keyword id="KW-1043">Host membrane</keyword>
<keyword id="KW-0472">Membrane</keyword>
<keyword id="KW-1185">Reference proteome</keyword>
<keyword id="KW-0812">Transmembrane</keyword>
<keyword id="KW-1133">Transmembrane helix</keyword>
<sequence>MLGMYLTTAFNFLTASTPKTMSEGMTGIWTGLSSALWKVKEGITNILPEIMVFLGEAWIILIPFAIFCIIKILNFFRVMVKGF</sequence>
<dbReference type="EMBL" id="X51344">
    <property type="protein sequence ID" value="CAA35731.1"/>
    <property type="molecule type" value="Genomic_DNA"/>
</dbReference>
<dbReference type="RefSeq" id="NP_040343.1">
    <property type="nucleotide sequence ID" value="NC_001365.1"/>
</dbReference>
<dbReference type="KEGG" id="vg:1260868"/>
<dbReference type="OrthoDB" id="24609at10239"/>
<dbReference type="Proteomes" id="UP000001252">
    <property type="component" value="Segment"/>
</dbReference>
<dbReference type="GO" id="GO:0033644">
    <property type="term" value="C:host cell membrane"/>
    <property type="evidence" value="ECO:0007669"/>
    <property type="project" value="UniProtKB-SubCell"/>
</dbReference>
<dbReference type="GO" id="GO:0016020">
    <property type="term" value="C:membrane"/>
    <property type="evidence" value="ECO:0007669"/>
    <property type="project" value="UniProtKB-KW"/>
</dbReference>